<proteinExistence type="inferred from homology"/>
<name>MAP21_AJECG</name>
<dbReference type="EC" id="3.4.11.18" evidence="1"/>
<dbReference type="EMBL" id="GG663365">
    <property type="protein sequence ID" value="EEH08774.1"/>
    <property type="molecule type" value="Genomic_DNA"/>
</dbReference>
<dbReference type="RefSeq" id="XP_045289255.1">
    <property type="nucleotide sequence ID" value="XM_045429360.1"/>
</dbReference>
<dbReference type="SMR" id="C0NIQ4"/>
<dbReference type="FunCoup" id="C0NIQ4">
    <property type="interactions" value="1112"/>
</dbReference>
<dbReference type="STRING" id="447093.C0NIQ4"/>
<dbReference type="GeneID" id="69035327"/>
<dbReference type="VEuPathDB" id="FungiDB:I7I50_10824"/>
<dbReference type="HOGENOM" id="CLU_015857_7_1_1"/>
<dbReference type="InParanoid" id="C0NIQ4"/>
<dbReference type="Proteomes" id="UP000001631">
    <property type="component" value="Unassembled WGS sequence"/>
</dbReference>
<dbReference type="GO" id="GO:0005737">
    <property type="term" value="C:cytoplasm"/>
    <property type="evidence" value="ECO:0007669"/>
    <property type="project" value="UniProtKB-SubCell"/>
</dbReference>
<dbReference type="GO" id="GO:0004239">
    <property type="term" value="F:initiator methionyl aminopeptidase activity"/>
    <property type="evidence" value="ECO:0007669"/>
    <property type="project" value="UniProtKB-UniRule"/>
</dbReference>
<dbReference type="GO" id="GO:0046872">
    <property type="term" value="F:metal ion binding"/>
    <property type="evidence" value="ECO:0007669"/>
    <property type="project" value="UniProtKB-UniRule"/>
</dbReference>
<dbReference type="GO" id="GO:0070006">
    <property type="term" value="F:metalloaminopeptidase activity"/>
    <property type="evidence" value="ECO:0007669"/>
    <property type="project" value="UniProtKB-UniRule"/>
</dbReference>
<dbReference type="GO" id="GO:0006508">
    <property type="term" value="P:proteolysis"/>
    <property type="evidence" value="ECO:0007669"/>
    <property type="project" value="UniProtKB-KW"/>
</dbReference>
<dbReference type="CDD" id="cd01088">
    <property type="entry name" value="MetAP2"/>
    <property type="match status" value="1"/>
</dbReference>
<dbReference type="Gene3D" id="3.90.230.10">
    <property type="entry name" value="Creatinase/methionine aminopeptidase superfamily"/>
    <property type="match status" value="1"/>
</dbReference>
<dbReference type="Gene3D" id="1.10.10.10">
    <property type="entry name" value="Winged helix-like DNA-binding domain superfamily/Winged helix DNA-binding domain"/>
    <property type="match status" value="1"/>
</dbReference>
<dbReference type="HAMAP" id="MF_03175">
    <property type="entry name" value="MetAP_2_euk"/>
    <property type="match status" value="1"/>
</dbReference>
<dbReference type="InterPro" id="IPR036005">
    <property type="entry name" value="Creatinase/aminopeptidase-like"/>
</dbReference>
<dbReference type="InterPro" id="IPR050247">
    <property type="entry name" value="Met_Aminopeptidase_Type2"/>
</dbReference>
<dbReference type="InterPro" id="IPR000994">
    <property type="entry name" value="Pept_M24"/>
</dbReference>
<dbReference type="InterPro" id="IPR001714">
    <property type="entry name" value="Pept_M24_MAP"/>
</dbReference>
<dbReference type="InterPro" id="IPR002468">
    <property type="entry name" value="Pept_M24A_MAP2"/>
</dbReference>
<dbReference type="InterPro" id="IPR018349">
    <property type="entry name" value="Pept_M24A_MAP2_BS"/>
</dbReference>
<dbReference type="InterPro" id="IPR036388">
    <property type="entry name" value="WH-like_DNA-bd_sf"/>
</dbReference>
<dbReference type="InterPro" id="IPR036390">
    <property type="entry name" value="WH_DNA-bd_sf"/>
</dbReference>
<dbReference type="NCBIfam" id="TIGR00501">
    <property type="entry name" value="met_pdase_II"/>
    <property type="match status" value="1"/>
</dbReference>
<dbReference type="PANTHER" id="PTHR45777">
    <property type="entry name" value="METHIONINE AMINOPEPTIDASE 2"/>
    <property type="match status" value="1"/>
</dbReference>
<dbReference type="PANTHER" id="PTHR45777:SF2">
    <property type="entry name" value="METHIONINE AMINOPEPTIDASE 2"/>
    <property type="match status" value="1"/>
</dbReference>
<dbReference type="Pfam" id="PF00557">
    <property type="entry name" value="Peptidase_M24"/>
    <property type="match status" value="1"/>
</dbReference>
<dbReference type="PRINTS" id="PR00599">
    <property type="entry name" value="MAPEPTIDASE"/>
</dbReference>
<dbReference type="SUPFAM" id="SSF55920">
    <property type="entry name" value="Creatinase/aminopeptidase"/>
    <property type="match status" value="1"/>
</dbReference>
<dbReference type="SUPFAM" id="SSF46785">
    <property type="entry name" value="Winged helix' DNA-binding domain"/>
    <property type="match status" value="1"/>
</dbReference>
<dbReference type="PROSITE" id="PS01202">
    <property type="entry name" value="MAP_2"/>
    <property type="match status" value="1"/>
</dbReference>
<sequence length="448" mass="49468">MAAQVIPELQSLNLKTEGGALPQELAPSGAPENEDGDSEDDNGDDQGADESRTIEVLAAKKKKKKKPKKKKKDTQKAQTEPPRVILSALFPNNEYPVGELVEYKDENAYRTTNEEKRYLDRMNNDFLSEYRYAAEVHKQVRQYAQKTIKPGQTLTEIAEGIEDSVRALTGHDGLTEGDNLLGGIAFPTGVNLNNCAAHYSPNAGNKMVLQYEDVMKVDFGVHMNGRIVDSAFTIAFDPVYDNLLAAVKDATNTGIREAGIDVRMSDIGAAIQEAMESYEVEIKGTTYPVKAIRNLNGHTIGQFEIHGGKNGKSVPIVKGGDQSKMEEGEVYAIETFGSTGRGYVRDDMETSHYAKVPDAPNVPLRLSSAKNLLNVITKNFGTLPFCRRYLDRLRQDKYLLGLNNLVANGLVDAYPPLCDIKGSYTAQFEHTILLRPNIKEVISRGDDY</sequence>
<feature type="chain" id="PRO_0000407593" description="Methionine aminopeptidase 2-1">
    <location>
        <begin position="1"/>
        <end position="448"/>
    </location>
</feature>
<feature type="region of interest" description="Disordered" evidence="2">
    <location>
        <begin position="1"/>
        <end position="83"/>
    </location>
</feature>
<feature type="compositionally biased region" description="Acidic residues" evidence="2">
    <location>
        <begin position="32"/>
        <end position="48"/>
    </location>
</feature>
<feature type="compositionally biased region" description="Basic residues" evidence="2">
    <location>
        <begin position="59"/>
        <end position="73"/>
    </location>
</feature>
<feature type="binding site" evidence="1">
    <location>
        <position position="198"/>
    </location>
    <ligand>
        <name>substrate</name>
    </ligand>
</feature>
<feature type="binding site" evidence="1">
    <location>
        <position position="218"/>
    </location>
    <ligand>
        <name>a divalent metal cation</name>
        <dbReference type="ChEBI" id="CHEBI:60240"/>
        <label>1</label>
    </ligand>
</feature>
<feature type="binding site" evidence="1">
    <location>
        <position position="229"/>
    </location>
    <ligand>
        <name>a divalent metal cation</name>
        <dbReference type="ChEBI" id="CHEBI:60240"/>
        <label>1</label>
    </ligand>
</feature>
<feature type="binding site" evidence="1">
    <location>
        <position position="229"/>
    </location>
    <ligand>
        <name>a divalent metal cation</name>
        <dbReference type="ChEBI" id="CHEBI:60240"/>
        <label>2</label>
        <note>catalytic</note>
    </ligand>
</feature>
<feature type="binding site" evidence="1">
    <location>
        <position position="298"/>
    </location>
    <ligand>
        <name>a divalent metal cation</name>
        <dbReference type="ChEBI" id="CHEBI:60240"/>
        <label>2</label>
        <note>catalytic</note>
    </ligand>
</feature>
<feature type="binding site" evidence="1">
    <location>
        <position position="306"/>
    </location>
    <ligand>
        <name>substrate</name>
    </ligand>
</feature>
<feature type="binding site" evidence="1">
    <location>
        <position position="334"/>
    </location>
    <ligand>
        <name>a divalent metal cation</name>
        <dbReference type="ChEBI" id="CHEBI:60240"/>
        <label>2</label>
        <note>catalytic</note>
    </ligand>
</feature>
<feature type="binding site" evidence="1">
    <location>
        <position position="429"/>
    </location>
    <ligand>
        <name>a divalent metal cation</name>
        <dbReference type="ChEBI" id="CHEBI:60240"/>
        <label>1</label>
    </ligand>
</feature>
<feature type="binding site" evidence="1">
    <location>
        <position position="429"/>
    </location>
    <ligand>
        <name>a divalent metal cation</name>
        <dbReference type="ChEBI" id="CHEBI:60240"/>
        <label>2</label>
        <note>catalytic</note>
    </ligand>
</feature>
<evidence type="ECO:0000255" key="1">
    <source>
        <dbReference type="HAMAP-Rule" id="MF_03175"/>
    </source>
</evidence>
<evidence type="ECO:0000256" key="2">
    <source>
        <dbReference type="SAM" id="MobiDB-lite"/>
    </source>
</evidence>
<protein>
    <recommendedName>
        <fullName evidence="1">Methionine aminopeptidase 2-1</fullName>
        <shortName evidence="1">MAP 2-1</shortName>
        <shortName evidence="1">MetAP 2-1</shortName>
        <ecNumber evidence="1">3.4.11.18</ecNumber>
    </recommendedName>
    <alternativeName>
        <fullName evidence="1">Peptidase M</fullName>
    </alternativeName>
</protein>
<gene>
    <name type="ORF">HCBG_02311</name>
</gene>
<reference key="1">
    <citation type="submission" date="2009-02" db="EMBL/GenBank/DDBJ databases">
        <title>The genome sequence of Ajellomyces capsulatus strain G186AR.</title>
        <authorList>
            <person name="Champion M."/>
            <person name="Cuomo C.A."/>
            <person name="Ma L.-J."/>
            <person name="Henn M.R."/>
            <person name="Sil A."/>
            <person name="Goldman B."/>
            <person name="Young S.K."/>
            <person name="Kodira C.D."/>
            <person name="Zeng Q."/>
            <person name="Koehrsen M."/>
            <person name="Alvarado L."/>
            <person name="Berlin A."/>
            <person name="Borenstein D."/>
            <person name="Chen Z."/>
            <person name="Engels R."/>
            <person name="Freedman E."/>
            <person name="Gellesch M."/>
            <person name="Goldberg J."/>
            <person name="Griggs A."/>
            <person name="Gujja S."/>
            <person name="Heiman D."/>
            <person name="Hepburn T."/>
            <person name="Howarth C."/>
            <person name="Jen D."/>
            <person name="Larson L."/>
            <person name="Lewis B."/>
            <person name="Mehta T."/>
            <person name="Park D."/>
            <person name="Pearson M."/>
            <person name="Roberts A."/>
            <person name="Saif S."/>
            <person name="Shea T."/>
            <person name="Shenoy N."/>
            <person name="Sisk P."/>
            <person name="Stolte C."/>
            <person name="Sykes S."/>
            <person name="Walk T."/>
            <person name="White J."/>
            <person name="Yandava C."/>
            <person name="Klein B."/>
            <person name="McEwen J.G."/>
            <person name="Puccia R."/>
            <person name="Goldman G.H."/>
            <person name="Felipe M.S."/>
            <person name="Nino-Vega G."/>
            <person name="San-Blas G."/>
            <person name="Taylor J."/>
            <person name="Mendoza L."/>
            <person name="Galagan J.E."/>
            <person name="Nusbaum C."/>
            <person name="Birren B.W."/>
        </authorList>
    </citation>
    <scope>NUCLEOTIDE SEQUENCE [LARGE SCALE GENOMIC DNA]</scope>
    <source>
        <strain>G186AR / H82 / ATCC MYA-2454 / RMSCC 2432</strain>
    </source>
</reference>
<accession>C0NIQ4</accession>
<comment type="function">
    <text evidence="1">Cotranslationally removes the N-terminal methionine from nascent proteins. The N-terminal methionine is often cleaved when the second residue in the primary sequence is small and uncharged (Met-Ala-, Cys, Gly, Pro, Ser, Thr, or Val).</text>
</comment>
<comment type="catalytic activity">
    <reaction evidence="1">
        <text>Release of N-terminal amino acids, preferentially methionine, from peptides and arylamides.</text>
        <dbReference type="EC" id="3.4.11.18"/>
    </reaction>
</comment>
<comment type="cofactor">
    <cofactor evidence="1">
        <name>Co(2+)</name>
        <dbReference type="ChEBI" id="CHEBI:48828"/>
    </cofactor>
    <cofactor evidence="1">
        <name>Zn(2+)</name>
        <dbReference type="ChEBI" id="CHEBI:29105"/>
    </cofactor>
    <cofactor evidence="1">
        <name>Mn(2+)</name>
        <dbReference type="ChEBI" id="CHEBI:29035"/>
    </cofactor>
    <cofactor evidence="1">
        <name>Fe(2+)</name>
        <dbReference type="ChEBI" id="CHEBI:29033"/>
    </cofactor>
    <text evidence="1">Binds 2 divalent metal cations per subunit. Has a high-affinity and a low affinity metal-binding site. The true nature of the physiological cofactor is under debate. The enzyme is active with cobalt, zinc, manganese or divalent iron ions. Most likely, methionine aminopeptidases function as mononuclear Fe(2+)-metalloproteases under physiological conditions, and the catalytically relevant metal-binding site has been assigned to the histidine-containing high-affinity site.</text>
</comment>
<comment type="subcellular location">
    <subcellularLocation>
        <location evidence="1">Cytoplasm</location>
    </subcellularLocation>
</comment>
<comment type="similarity">
    <text evidence="1">Belongs to the peptidase M24A family. Methionine aminopeptidase eukaryotic type 2 subfamily.</text>
</comment>
<organism>
    <name type="scientific">Ajellomyces capsulatus (strain G186AR / H82 / ATCC MYA-2454 / RMSCC 2432)</name>
    <name type="common">Darling's disease fungus</name>
    <name type="synonym">Histoplasma capsulatum</name>
    <dbReference type="NCBI Taxonomy" id="447093"/>
    <lineage>
        <taxon>Eukaryota</taxon>
        <taxon>Fungi</taxon>
        <taxon>Dikarya</taxon>
        <taxon>Ascomycota</taxon>
        <taxon>Pezizomycotina</taxon>
        <taxon>Eurotiomycetes</taxon>
        <taxon>Eurotiomycetidae</taxon>
        <taxon>Onygenales</taxon>
        <taxon>Ajellomycetaceae</taxon>
        <taxon>Histoplasma</taxon>
    </lineage>
</organism>
<keyword id="KW-0031">Aminopeptidase</keyword>
<keyword id="KW-0963">Cytoplasm</keyword>
<keyword id="KW-0378">Hydrolase</keyword>
<keyword id="KW-0479">Metal-binding</keyword>
<keyword id="KW-0645">Protease</keyword>
<keyword id="KW-1185">Reference proteome</keyword>